<feature type="chain" id="PRO_0000225353" description="NAD(P)H-quinone oxidoreductase subunit 2">
    <location>
        <begin position="1"/>
        <end position="513"/>
    </location>
</feature>
<feature type="transmembrane region" description="Helical" evidence="1">
    <location>
        <begin position="12"/>
        <end position="32"/>
    </location>
</feature>
<feature type="transmembrane region" description="Helical" evidence="1">
    <location>
        <begin position="41"/>
        <end position="61"/>
    </location>
</feature>
<feature type="transmembrane region" description="Helical" evidence="1">
    <location>
        <begin position="77"/>
        <end position="97"/>
    </location>
</feature>
<feature type="transmembrane region" description="Helical" evidence="1">
    <location>
        <begin position="104"/>
        <end position="124"/>
    </location>
</feature>
<feature type="transmembrane region" description="Helical" evidence="1">
    <location>
        <begin position="130"/>
        <end position="150"/>
    </location>
</feature>
<feature type="transmembrane region" description="Helical" evidence="1">
    <location>
        <begin position="165"/>
        <end position="185"/>
    </location>
</feature>
<feature type="transmembrane region" description="Helical" evidence="1">
    <location>
        <begin position="199"/>
        <end position="219"/>
    </location>
</feature>
<feature type="transmembrane region" description="Helical" evidence="1">
    <location>
        <begin position="238"/>
        <end position="258"/>
    </location>
</feature>
<feature type="transmembrane region" description="Helical" evidence="1">
    <location>
        <begin position="272"/>
        <end position="292"/>
    </location>
</feature>
<feature type="transmembrane region" description="Helical" evidence="1">
    <location>
        <begin position="300"/>
        <end position="320"/>
    </location>
</feature>
<feature type="transmembrane region" description="Helical" evidence="1">
    <location>
        <begin position="328"/>
        <end position="348"/>
    </location>
</feature>
<feature type="transmembrane region" description="Helical" evidence="1">
    <location>
        <begin position="372"/>
        <end position="392"/>
    </location>
</feature>
<feature type="transmembrane region" description="Helical" evidence="1">
    <location>
        <begin position="394"/>
        <end position="414"/>
    </location>
</feature>
<feature type="transmembrane region" description="Helical" evidence="1">
    <location>
        <begin position="456"/>
        <end position="476"/>
    </location>
</feature>
<feature type="region of interest" description="Disordered" evidence="2">
    <location>
        <begin position="494"/>
        <end position="513"/>
    </location>
</feature>
<feature type="compositionally biased region" description="Polar residues" evidence="2">
    <location>
        <begin position="494"/>
        <end position="505"/>
    </location>
</feature>
<organism>
    <name type="scientific">Gloeobacter violaceus (strain ATCC 29082 / PCC 7421)</name>
    <dbReference type="NCBI Taxonomy" id="251221"/>
    <lineage>
        <taxon>Bacteria</taxon>
        <taxon>Bacillati</taxon>
        <taxon>Cyanobacteriota</taxon>
        <taxon>Cyanophyceae</taxon>
        <taxon>Gloeobacterales</taxon>
        <taxon>Gloeobacteraceae</taxon>
        <taxon>Gloeobacter</taxon>
    </lineage>
</organism>
<dbReference type="EC" id="7.1.1.-" evidence="1"/>
<dbReference type="EMBL" id="BA000045">
    <property type="protein sequence ID" value="BAC91061.1"/>
    <property type="molecule type" value="Genomic_DNA"/>
</dbReference>
<dbReference type="RefSeq" id="NP_926066.1">
    <property type="nucleotide sequence ID" value="NC_005125.1"/>
</dbReference>
<dbReference type="RefSeq" id="WP_011143113.1">
    <property type="nucleotide sequence ID" value="NC_005125.1"/>
</dbReference>
<dbReference type="SMR" id="Q7NGP8"/>
<dbReference type="FunCoup" id="Q7NGP8">
    <property type="interactions" value="81"/>
</dbReference>
<dbReference type="STRING" id="251221.gene:10760626"/>
<dbReference type="EnsemblBacteria" id="BAC91061">
    <property type="protein sequence ID" value="BAC91061"/>
    <property type="gene ID" value="BAC91061"/>
</dbReference>
<dbReference type="KEGG" id="gvi:glr3120"/>
<dbReference type="PATRIC" id="fig|251221.4.peg.3150"/>
<dbReference type="eggNOG" id="COG1007">
    <property type="taxonomic scope" value="Bacteria"/>
</dbReference>
<dbReference type="HOGENOM" id="CLU_007100_1_2_3"/>
<dbReference type="InParanoid" id="Q7NGP8"/>
<dbReference type="OrthoDB" id="9811718at2"/>
<dbReference type="PhylomeDB" id="Q7NGP8"/>
<dbReference type="Proteomes" id="UP000000557">
    <property type="component" value="Chromosome"/>
</dbReference>
<dbReference type="GO" id="GO:0005886">
    <property type="term" value="C:plasma membrane"/>
    <property type="evidence" value="ECO:0007669"/>
    <property type="project" value="UniProtKB-SubCell"/>
</dbReference>
<dbReference type="GO" id="GO:0008137">
    <property type="term" value="F:NADH dehydrogenase (ubiquinone) activity"/>
    <property type="evidence" value="ECO:0007669"/>
    <property type="project" value="InterPro"/>
</dbReference>
<dbReference type="GO" id="GO:0048038">
    <property type="term" value="F:quinone binding"/>
    <property type="evidence" value="ECO:0007669"/>
    <property type="project" value="UniProtKB-KW"/>
</dbReference>
<dbReference type="GO" id="GO:0042773">
    <property type="term" value="P:ATP synthesis coupled electron transport"/>
    <property type="evidence" value="ECO:0007669"/>
    <property type="project" value="InterPro"/>
</dbReference>
<dbReference type="GO" id="GO:0019684">
    <property type="term" value="P:photosynthesis, light reaction"/>
    <property type="evidence" value="ECO:0007669"/>
    <property type="project" value="UniProtKB-UniRule"/>
</dbReference>
<dbReference type="HAMAP" id="MF_00445">
    <property type="entry name" value="NDH1_NuoN_1"/>
    <property type="match status" value="1"/>
</dbReference>
<dbReference type="InterPro" id="IPR010096">
    <property type="entry name" value="NADH-Q_OxRdtase_suN/2"/>
</dbReference>
<dbReference type="InterPro" id="IPR001750">
    <property type="entry name" value="ND/Mrp_TM"/>
</dbReference>
<dbReference type="InterPro" id="IPR045693">
    <property type="entry name" value="Ndh2_N"/>
</dbReference>
<dbReference type="NCBIfam" id="TIGR01770">
    <property type="entry name" value="NDH_I_N"/>
    <property type="match status" value="1"/>
</dbReference>
<dbReference type="NCBIfam" id="NF002701">
    <property type="entry name" value="PRK02504.1"/>
    <property type="match status" value="1"/>
</dbReference>
<dbReference type="PANTHER" id="PTHR22773">
    <property type="entry name" value="NADH DEHYDROGENASE"/>
    <property type="match status" value="1"/>
</dbReference>
<dbReference type="Pfam" id="PF19530">
    <property type="entry name" value="Ndh2_N"/>
    <property type="match status" value="1"/>
</dbReference>
<dbReference type="Pfam" id="PF00361">
    <property type="entry name" value="Proton_antipo_M"/>
    <property type="match status" value="1"/>
</dbReference>
<dbReference type="PRINTS" id="PR01434">
    <property type="entry name" value="NADHDHGNASE5"/>
</dbReference>
<gene>
    <name evidence="1" type="primary">ndhB</name>
    <name type="ordered locus">glr3120</name>
</gene>
<evidence type="ECO:0000255" key="1">
    <source>
        <dbReference type="HAMAP-Rule" id="MF_00445"/>
    </source>
</evidence>
<evidence type="ECO:0000256" key="2">
    <source>
        <dbReference type="SAM" id="MobiDB-lite"/>
    </source>
</evidence>
<protein>
    <recommendedName>
        <fullName evidence="1">NAD(P)H-quinone oxidoreductase subunit 2</fullName>
        <ecNumber evidence="1">7.1.1.-</ecNumber>
    </recommendedName>
    <alternativeName>
        <fullName evidence="1">NAD(P)H dehydrogenase subunit 2</fullName>
    </alternativeName>
    <alternativeName>
        <fullName evidence="1">NADH-plastoquinone oxidoreductase subunit 2</fullName>
    </alternativeName>
    <alternativeName>
        <fullName evidence="1">NDH-1, subunit 2</fullName>
    </alternativeName>
</protein>
<proteinExistence type="inferred from homology"/>
<keyword id="KW-0997">Cell inner membrane</keyword>
<keyword id="KW-1003">Cell membrane</keyword>
<keyword id="KW-0472">Membrane</keyword>
<keyword id="KW-0520">NAD</keyword>
<keyword id="KW-0521">NADP</keyword>
<keyword id="KW-0618">Plastoquinone</keyword>
<keyword id="KW-0874">Quinone</keyword>
<keyword id="KW-1185">Reference proteome</keyword>
<keyword id="KW-1278">Translocase</keyword>
<keyword id="KW-0812">Transmembrane</keyword>
<keyword id="KW-1133">Transmembrane helix</keyword>
<keyword id="KW-0813">Transport</keyword>
<sequence length="513" mass="54857">MNIDLAALNAGTLWPEYIVTITLIVVLLVDLISGRKASWSLPYLALLGLGIATATLLPMWILENPVSFLGSFTADPLSVVFRAFILISAALTVLMSVRYINQSSLATAEFYVLLLGATLGAMLLSGSSEMAMIFVALELLSITSYLLSGYAKLDKRSNEASLKYLLIGAASSGIFLYGMSLLYGFSGGQTQLTEIAPRIVNLGFPALLSLVLVAAGICFKLSAVPFHQWTPDVYEGSPTPVVAFLSVGSKAAGFALAIRFMTSAYPGFSEQWQTLFVLLAILSMVLGNVVAIAQTSMKRMLAYSSIAQAGYVMIGLAIGTQEGYSSMILYIGTYLFMNLGAFMAVVLFSLRTGTDEITAYSGLYQKDPFLTLVLSLCLLSLAGIPPLAGFFGKLYLFWAAVQSQAYTLVFFGLVTSVASIYYYVRVVKLMLVKEPSPQVLAYSEAGDQDGIQTLKAGMLITTVATVVLGILFPPLISLADTSLRATPSLQQVRTATPVSRVSTGAQAPADHGR</sequence>
<accession>Q7NGP8</accession>
<name>NU2C_GLOVI</name>
<reference key="1">
    <citation type="journal article" date="2003" name="DNA Res.">
        <title>Complete genome structure of Gloeobacter violaceus PCC 7421, a cyanobacterium that lacks thylakoids.</title>
        <authorList>
            <person name="Nakamura Y."/>
            <person name="Kaneko T."/>
            <person name="Sato S."/>
            <person name="Mimuro M."/>
            <person name="Miyashita H."/>
            <person name="Tsuchiya T."/>
            <person name="Sasamoto S."/>
            <person name="Watanabe A."/>
            <person name="Kawashima K."/>
            <person name="Kishida Y."/>
            <person name="Kiyokawa C."/>
            <person name="Kohara M."/>
            <person name="Matsumoto M."/>
            <person name="Matsuno A."/>
            <person name="Nakazaki N."/>
            <person name="Shimpo S."/>
            <person name="Takeuchi C."/>
            <person name="Yamada M."/>
            <person name="Tabata S."/>
        </authorList>
    </citation>
    <scope>NUCLEOTIDE SEQUENCE [LARGE SCALE GENOMIC DNA]</scope>
    <source>
        <strain>ATCC 29082 / PCC 7421</strain>
    </source>
</reference>
<comment type="function">
    <text evidence="1">NDH-1 shuttles electrons from an unknown electron donor, via FMN and iron-sulfur (Fe-S) centers, to quinones in the respiratory and/or the photosynthetic chain. The immediate electron acceptor for the enzyme in this species is believed to be plastoquinone. Couples the redox reaction to proton translocation, and thus conserves the redox energy in a proton gradient. Cyanobacterial NDH-1 also plays a role in inorganic carbon-concentration.</text>
</comment>
<comment type="catalytic activity">
    <reaction evidence="1">
        <text>a plastoquinone + NADH + (n+1) H(+)(in) = a plastoquinol + NAD(+) + n H(+)(out)</text>
        <dbReference type="Rhea" id="RHEA:42608"/>
        <dbReference type="Rhea" id="RHEA-COMP:9561"/>
        <dbReference type="Rhea" id="RHEA-COMP:9562"/>
        <dbReference type="ChEBI" id="CHEBI:15378"/>
        <dbReference type="ChEBI" id="CHEBI:17757"/>
        <dbReference type="ChEBI" id="CHEBI:57540"/>
        <dbReference type="ChEBI" id="CHEBI:57945"/>
        <dbReference type="ChEBI" id="CHEBI:62192"/>
    </reaction>
</comment>
<comment type="catalytic activity">
    <reaction evidence="1">
        <text>a plastoquinone + NADPH + (n+1) H(+)(in) = a plastoquinol + NADP(+) + n H(+)(out)</text>
        <dbReference type="Rhea" id="RHEA:42612"/>
        <dbReference type="Rhea" id="RHEA-COMP:9561"/>
        <dbReference type="Rhea" id="RHEA-COMP:9562"/>
        <dbReference type="ChEBI" id="CHEBI:15378"/>
        <dbReference type="ChEBI" id="CHEBI:17757"/>
        <dbReference type="ChEBI" id="CHEBI:57783"/>
        <dbReference type="ChEBI" id="CHEBI:58349"/>
        <dbReference type="ChEBI" id="CHEBI:62192"/>
    </reaction>
</comment>
<comment type="subunit">
    <text evidence="1">NDH-1 can be composed of about 15 different subunits; different subcomplexes with different compositions have been identified which probably have different functions.</text>
</comment>
<comment type="subcellular location">
    <subcellularLocation>
        <location evidence="1">Cell inner membrane</location>
        <topology evidence="1">Multi-pass membrane protein</topology>
    </subcellularLocation>
</comment>
<comment type="similarity">
    <text evidence="1">Belongs to the complex I subunit 2 family.</text>
</comment>